<keyword id="KW-0004">4Fe-4S</keyword>
<keyword id="KW-0963">Cytoplasm</keyword>
<keyword id="KW-0408">Iron</keyword>
<keyword id="KW-0411">Iron-sulfur</keyword>
<keyword id="KW-0479">Metal-binding</keyword>
<keyword id="KW-1185">Reference proteome</keyword>
<keyword id="KW-0949">S-adenosyl-L-methionine</keyword>
<keyword id="KW-0808">Transferase</keyword>
<keyword id="KW-0819">tRNA processing</keyword>
<comment type="function">
    <text evidence="1">Catalyzes the methylthiolation of N6-(dimethylallyl)adenosine (i(6)A), leading to the formation of 2-methylthio-N6-(dimethylallyl)adenosine (ms(2)i(6)A) at position 37 in tRNAs that read codons beginning with uridine.</text>
</comment>
<comment type="catalytic activity">
    <reaction evidence="1">
        <text>N(6)-dimethylallyladenosine(37) in tRNA + (sulfur carrier)-SH + AH2 + 2 S-adenosyl-L-methionine = 2-methylsulfanyl-N(6)-dimethylallyladenosine(37) in tRNA + (sulfur carrier)-H + 5'-deoxyadenosine + L-methionine + A + S-adenosyl-L-homocysteine + 2 H(+)</text>
        <dbReference type="Rhea" id="RHEA:37067"/>
        <dbReference type="Rhea" id="RHEA-COMP:10375"/>
        <dbReference type="Rhea" id="RHEA-COMP:10376"/>
        <dbReference type="Rhea" id="RHEA-COMP:14737"/>
        <dbReference type="Rhea" id="RHEA-COMP:14739"/>
        <dbReference type="ChEBI" id="CHEBI:13193"/>
        <dbReference type="ChEBI" id="CHEBI:15378"/>
        <dbReference type="ChEBI" id="CHEBI:17319"/>
        <dbReference type="ChEBI" id="CHEBI:17499"/>
        <dbReference type="ChEBI" id="CHEBI:29917"/>
        <dbReference type="ChEBI" id="CHEBI:57844"/>
        <dbReference type="ChEBI" id="CHEBI:57856"/>
        <dbReference type="ChEBI" id="CHEBI:59789"/>
        <dbReference type="ChEBI" id="CHEBI:64428"/>
        <dbReference type="ChEBI" id="CHEBI:74415"/>
        <dbReference type="ChEBI" id="CHEBI:74417"/>
        <dbReference type="EC" id="2.8.4.3"/>
    </reaction>
</comment>
<comment type="cofactor">
    <cofactor evidence="1">
        <name>[4Fe-4S] cluster</name>
        <dbReference type="ChEBI" id="CHEBI:49883"/>
    </cofactor>
    <text evidence="1">Binds 2 [4Fe-4S] clusters. One cluster is coordinated with 3 cysteines and an exchangeable S-adenosyl-L-methionine.</text>
</comment>
<comment type="subunit">
    <text evidence="1">Monomer.</text>
</comment>
<comment type="subcellular location">
    <subcellularLocation>
        <location evidence="1">Cytoplasm</location>
    </subcellularLocation>
</comment>
<comment type="similarity">
    <text evidence="1">Belongs to the methylthiotransferase family. MiaB subfamily.</text>
</comment>
<feature type="chain" id="PRO_0000374557" description="tRNA-2-methylthio-N(6)-dimethylallyladenosine synthase">
    <location>
        <begin position="1"/>
        <end position="440"/>
    </location>
</feature>
<feature type="domain" description="MTTase N-terminal" evidence="1">
    <location>
        <begin position="5"/>
        <end position="121"/>
    </location>
</feature>
<feature type="domain" description="Radical SAM core" evidence="2">
    <location>
        <begin position="145"/>
        <end position="378"/>
    </location>
</feature>
<feature type="domain" description="TRAM" evidence="1">
    <location>
        <begin position="378"/>
        <end position="440"/>
    </location>
</feature>
<feature type="binding site" evidence="1">
    <location>
        <position position="14"/>
    </location>
    <ligand>
        <name>[4Fe-4S] cluster</name>
        <dbReference type="ChEBI" id="CHEBI:49883"/>
        <label>1</label>
    </ligand>
</feature>
<feature type="binding site" evidence="1">
    <location>
        <position position="50"/>
    </location>
    <ligand>
        <name>[4Fe-4S] cluster</name>
        <dbReference type="ChEBI" id="CHEBI:49883"/>
        <label>1</label>
    </ligand>
</feature>
<feature type="binding site" evidence="1">
    <location>
        <position position="84"/>
    </location>
    <ligand>
        <name>[4Fe-4S] cluster</name>
        <dbReference type="ChEBI" id="CHEBI:49883"/>
        <label>1</label>
    </ligand>
</feature>
<feature type="binding site" evidence="1">
    <location>
        <position position="159"/>
    </location>
    <ligand>
        <name>[4Fe-4S] cluster</name>
        <dbReference type="ChEBI" id="CHEBI:49883"/>
        <label>2</label>
        <note>4Fe-4S-S-AdoMet</note>
    </ligand>
</feature>
<feature type="binding site" evidence="1">
    <location>
        <position position="163"/>
    </location>
    <ligand>
        <name>[4Fe-4S] cluster</name>
        <dbReference type="ChEBI" id="CHEBI:49883"/>
        <label>2</label>
        <note>4Fe-4S-S-AdoMet</note>
    </ligand>
</feature>
<feature type="binding site" evidence="1">
    <location>
        <position position="166"/>
    </location>
    <ligand>
        <name>[4Fe-4S] cluster</name>
        <dbReference type="ChEBI" id="CHEBI:49883"/>
        <label>2</label>
        <note>4Fe-4S-S-AdoMet</note>
    </ligand>
</feature>
<gene>
    <name evidence="1" type="primary">miaB</name>
    <name type="ordered locus">TM1040_0185</name>
</gene>
<accession>Q1GK98</accession>
<name>MIAB_RUEST</name>
<dbReference type="EC" id="2.8.4.3" evidence="1"/>
<dbReference type="EMBL" id="CP000377">
    <property type="protein sequence ID" value="ABF62918.1"/>
    <property type="molecule type" value="Genomic_DNA"/>
</dbReference>
<dbReference type="RefSeq" id="WP_011537553.1">
    <property type="nucleotide sequence ID" value="NC_008044.1"/>
</dbReference>
<dbReference type="SMR" id="Q1GK98"/>
<dbReference type="STRING" id="292414.TM1040_0185"/>
<dbReference type="KEGG" id="sit:TM1040_0185"/>
<dbReference type="eggNOG" id="COG0621">
    <property type="taxonomic scope" value="Bacteria"/>
</dbReference>
<dbReference type="HOGENOM" id="CLU_018697_2_0_5"/>
<dbReference type="OrthoDB" id="9805215at2"/>
<dbReference type="Proteomes" id="UP000000636">
    <property type="component" value="Chromosome"/>
</dbReference>
<dbReference type="GO" id="GO:0005829">
    <property type="term" value="C:cytosol"/>
    <property type="evidence" value="ECO:0007669"/>
    <property type="project" value="TreeGrafter"/>
</dbReference>
<dbReference type="GO" id="GO:0051539">
    <property type="term" value="F:4 iron, 4 sulfur cluster binding"/>
    <property type="evidence" value="ECO:0007669"/>
    <property type="project" value="UniProtKB-UniRule"/>
</dbReference>
<dbReference type="GO" id="GO:0046872">
    <property type="term" value="F:metal ion binding"/>
    <property type="evidence" value="ECO:0007669"/>
    <property type="project" value="UniProtKB-KW"/>
</dbReference>
<dbReference type="GO" id="GO:0035597">
    <property type="term" value="F:N6-isopentenyladenosine methylthiotransferase activity"/>
    <property type="evidence" value="ECO:0007669"/>
    <property type="project" value="TreeGrafter"/>
</dbReference>
<dbReference type="CDD" id="cd01335">
    <property type="entry name" value="Radical_SAM"/>
    <property type="match status" value="1"/>
</dbReference>
<dbReference type="FunFam" id="3.40.50.12160:FF:000001">
    <property type="entry name" value="tRNA-2-methylthio-N(6)-dimethylallyladenosine synthase"/>
    <property type="match status" value="1"/>
</dbReference>
<dbReference type="FunFam" id="3.80.30.20:FF:000001">
    <property type="entry name" value="tRNA-2-methylthio-N(6)-dimethylallyladenosine synthase 2"/>
    <property type="match status" value="1"/>
</dbReference>
<dbReference type="Gene3D" id="3.40.50.12160">
    <property type="entry name" value="Methylthiotransferase, N-terminal domain"/>
    <property type="match status" value="1"/>
</dbReference>
<dbReference type="Gene3D" id="3.80.30.20">
    <property type="entry name" value="tm_1862 like domain"/>
    <property type="match status" value="1"/>
</dbReference>
<dbReference type="HAMAP" id="MF_01864">
    <property type="entry name" value="tRNA_metthiotr_MiaB"/>
    <property type="match status" value="1"/>
</dbReference>
<dbReference type="InterPro" id="IPR006638">
    <property type="entry name" value="Elp3/MiaA/NifB-like_rSAM"/>
</dbReference>
<dbReference type="InterPro" id="IPR005839">
    <property type="entry name" value="Methylthiotransferase"/>
</dbReference>
<dbReference type="InterPro" id="IPR020612">
    <property type="entry name" value="Methylthiotransferase_CS"/>
</dbReference>
<dbReference type="InterPro" id="IPR013848">
    <property type="entry name" value="Methylthiotransferase_N"/>
</dbReference>
<dbReference type="InterPro" id="IPR038135">
    <property type="entry name" value="Methylthiotransferase_N_sf"/>
</dbReference>
<dbReference type="InterPro" id="IPR006463">
    <property type="entry name" value="MiaB_methiolase"/>
</dbReference>
<dbReference type="InterPro" id="IPR007197">
    <property type="entry name" value="rSAM"/>
</dbReference>
<dbReference type="InterPro" id="IPR023404">
    <property type="entry name" value="rSAM_horseshoe"/>
</dbReference>
<dbReference type="InterPro" id="IPR002792">
    <property type="entry name" value="TRAM_dom"/>
</dbReference>
<dbReference type="NCBIfam" id="TIGR01574">
    <property type="entry name" value="miaB-methiolase"/>
    <property type="match status" value="1"/>
</dbReference>
<dbReference type="NCBIfam" id="TIGR00089">
    <property type="entry name" value="MiaB/RimO family radical SAM methylthiotransferase"/>
    <property type="match status" value="1"/>
</dbReference>
<dbReference type="PANTHER" id="PTHR43020">
    <property type="entry name" value="CDK5 REGULATORY SUBUNIT-ASSOCIATED PROTEIN 1"/>
    <property type="match status" value="1"/>
</dbReference>
<dbReference type="PANTHER" id="PTHR43020:SF2">
    <property type="entry name" value="MITOCHONDRIAL TRNA METHYLTHIOTRANSFERASE CDK5RAP1"/>
    <property type="match status" value="1"/>
</dbReference>
<dbReference type="Pfam" id="PF04055">
    <property type="entry name" value="Radical_SAM"/>
    <property type="match status" value="1"/>
</dbReference>
<dbReference type="Pfam" id="PF00919">
    <property type="entry name" value="UPF0004"/>
    <property type="match status" value="1"/>
</dbReference>
<dbReference type="SFLD" id="SFLDF00273">
    <property type="entry name" value="(dimethylallyl)adenosine_tRNA"/>
    <property type="match status" value="1"/>
</dbReference>
<dbReference type="SFLD" id="SFLDG01082">
    <property type="entry name" value="B12-binding_domain_containing"/>
    <property type="match status" value="1"/>
</dbReference>
<dbReference type="SFLD" id="SFLDG01061">
    <property type="entry name" value="methylthiotransferase"/>
    <property type="match status" value="1"/>
</dbReference>
<dbReference type="SMART" id="SM00729">
    <property type="entry name" value="Elp3"/>
    <property type="match status" value="1"/>
</dbReference>
<dbReference type="SUPFAM" id="SSF102114">
    <property type="entry name" value="Radical SAM enzymes"/>
    <property type="match status" value="1"/>
</dbReference>
<dbReference type="PROSITE" id="PS51449">
    <property type="entry name" value="MTTASE_N"/>
    <property type="match status" value="1"/>
</dbReference>
<dbReference type="PROSITE" id="PS01278">
    <property type="entry name" value="MTTASE_RADICAL"/>
    <property type="match status" value="1"/>
</dbReference>
<dbReference type="PROSITE" id="PS51918">
    <property type="entry name" value="RADICAL_SAM"/>
    <property type="match status" value="1"/>
</dbReference>
<dbReference type="PROSITE" id="PS50926">
    <property type="entry name" value="TRAM"/>
    <property type="match status" value="1"/>
</dbReference>
<reference key="1">
    <citation type="submission" date="2006-05" db="EMBL/GenBank/DDBJ databases">
        <title>Complete sequence of chromosome of Silicibacter sp. TM1040.</title>
        <authorList>
            <consortium name="US DOE Joint Genome Institute"/>
            <person name="Copeland A."/>
            <person name="Lucas S."/>
            <person name="Lapidus A."/>
            <person name="Barry K."/>
            <person name="Detter J.C."/>
            <person name="Glavina del Rio T."/>
            <person name="Hammon N."/>
            <person name="Israni S."/>
            <person name="Dalin E."/>
            <person name="Tice H."/>
            <person name="Pitluck S."/>
            <person name="Brettin T."/>
            <person name="Bruce D."/>
            <person name="Han C."/>
            <person name="Tapia R."/>
            <person name="Goodwin L."/>
            <person name="Thompson L.S."/>
            <person name="Gilna P."/>
            <person name="Schmutz J."/>
            <person name="Larimer F."/>
            <person name="Land M."/>
            <person name="Hauser L."/>
            <person name="Kyrpides N."/>
            <person name="Kim E."/>
            <person name="Belas R."/>
            <person name="Moran M.A."/>
            <person name="Buchan A."/>
            <person name="Gonzalez J.M."/>
            <person name="Schell M.A."/>
            <person name="Sun F."/>
            <person name="Richardson P."/>
        </authorList>
    </citation>
    <scope>NUCLEOTIDE SEQUENCE [LARGE SCALE GENOMIC DNA]</scope>
    <source>
        <strain>TM1040</strain>
    </source>
</reference>
<protein>
    <recommendedName>
        <fullName evidence="1">tRNA-2-methylthio-N(6)-dimethylallyladenosine synthase</fullName>
        <ecNumber evidence="1">2.8.4.3</ecNumber>
    </recommendedName>
    <alternativeName>
        <fullName evidence="1">(Dimethylallyl)adenosine tRNA methylthiotransferase MiaB</fullName>
    </alternativeName>
    <alternativeName>
        <fullName evidence="1">tRNA-i(6)A37 methylthiotransferase</fullName>
    </alternativeName>
</protein>
<proteinExistence type="inferred from homology"/>
<organism>
    <name type="scientific">Ruegeria sp. (strain TM1040)</name>
    <name type="common">Silicibacter sp.</name>
    <dbReference type="NCBI Taxonomy" id="292414"/>
    <lineage>
        <taxon>Bacteria</taxon>
        <taxon>Pseudomonadati</taxon>
        <taxon>Pseudomonadota</taxon>
        <taxon>Alphaproteobacteria</taxon>
        <taxon>Rhodobacterales</taxon>
        <taxon>Roseobacteraceae</taxon>
        <taxon>Ruegeria</taxon>
    </lineage>
</organism>
<evidence type="ECO:0000255" key="1">
    <source>
        <dbReference type="HAMAP-Rule" id="MF_01864"/>
    </source>
</evidence>
<evidence type="ECO:0000255" key="2">
    <source>
        <dbReference type="PROSITE-ProRule" id="PRU01266"/>
    </source>
</evidence>
<sequence>MSAPKKLYIKTYGCQMNVYDSERMAETLGGQGYVETQTPDDADMILLNTCHIREKAAEKVYSELGRFKGLKAEKPDLKIGVAGCVAQAEGEEIMRRQPLVDLVVGPQSYHRLPEMEAKAGTGEKVLDTDFPEEDKFEKLKRRPKAKRGPTAFLTVQEGCDKFCAFCVVPYTRGAEVSRPVDRVLREAEDLVERGVREITLLGQNVNAYHGAGPNGDMTLAQLIWELDKIDGLERIRFTTSHPNDMMDDLIEAHGTCKKLMPYLHLPVQAGSDKILKRMNRSHTAESYIRLIERIRAARPDILISGDFIVGFPEETEEDFQATLDLVEEVKYGTAYSFKYSTRPGTPAAERAQVDPKEADDRLQRLQAVLTRQQREVQDSMVGRELGVLFEKAGRFAGQMVGKSDYLHAVHVADCDAKIGDLRRVRIVSSGANSLAGELID</sequence>